<organism>
    <name type="scientific">Conus figulinus</name>
    <name type="common">Fig cone</name>
    <dbReference type="NCBI Taxonomy" id="101301"/>
    <lineage>
        <taxon>Eukaryota</taxon>
        <taxon>Metazoa</taxon>
        <taxon>Spiralia</taxon>
        <taxon>Lophotrochozoa</taxon>
        <taxon>Mollusca</taxon>
        <taxon>Gastropoda</taxon>
        <taxon>Caenogastropoda</taxon>
        <taxon>Neogastropoda</taxon>
        <taxon>Conoidea</taxon>
        <taxon>Conidae</taxon>
        <taxon>Conus</taxon>
        <taxon>Dendroconus</taxon>
    </lineage>
</organism>
<evidence type="ECO:0000250" key="1"/>
<evidence type="ECO:0000250" key="2">
    <source>
        <dbReference type="UniProtKB" id="Q7Z094"/>
    </source>
</evidence>
<evidence type="ECO:0000305" key="3"/>
<sequence>GHVSCGKDGRACDYHADCCNCCLGGICKPSTSWIGCSTNVFLTR</sequence>
<accession>P0C256</accession>
<name>I1B1_CONFI</name>
<dbReference type="ConoServer" id="1421">
    <property type="toxin name" value="Fi11.1a"/>
</dbReference>
<dbReference type="GO" id="GO:0005576">
    <property type="term" value="C:extracellular region"/>
    <property type="evidence" value="ECO:0007669"/>
    <property type="project" value="UniProtKB-SubCell"/>
</dbReference>
<dbReference type="GO" id="GO:0017080">
    <property type="term" value="F:sodium channel regulator activity"/>
    <property type="evidence" value="ECO:0007669"/>
    <property type="project" value="UniProtKB-KW"/>
</dbReference>
<dbReference type="GO" id="GO:0090729">
    <property type="term" value="F:toxin activity"/>
    <property type="evidence" value="ECO:0007669"/>
    <property type="project" value="UniProtKB-KW"/>
</dbReference>
<dbReference type="Gene3D" id="4.10.40.80">
    <property type="match status" value="1"/>
</dbReference>
<dbReference type="InterPro" id="IPR013141">
    <property type="entry name" value="Conotoxin-I_CS"/>
</dbReference>
<dbReference type="InterPro" id="IPR012624">
    <property type="entry name" value="Toxin_19"/>
</dbReference>
<dbReference type="Pfam" id="PF08088">
    <property type="entry name" value="Toxin_19"/>
    <property type="match status" value="1"/>
</dbReference>
<dbReference type="PROSITE" id="PS60019">
    <property type="entry name" value="I_CONOTOXIN"/>
    <property type="match status" value="1"/>
</dbReference>
<reference key="1">
    <citation type="journal article" date="2005" name="FEBS J.">
        <title>Characterization of D-amino-acid-containing excitatory conotoxins and redefinition of the I-conotoxin superfamily.</title>
        <authorList>
            <person name="Buczek O."/>
            <person name="Yoshikami D."/>
            <person name="Watkins M."/>
            <person name="Bulaj G."/>
            <person name="Jimenez E.C."/>
            <person name="Olivera B.M."/>
        </authorList>
    </citation>
    <scope>NUCLEOTIDE SEQUENCE [MRNA]</scope>
    <source>
        <tissue>Venom duct</tissue>
    </source>
</reference>
<reference key="2">
    <citation type="journal article" date="2005" name="FEBS J.">
        <authorList>
            <person name="Buczek O."/>
            <person name="Yoshikami D."/>
            <person name="Watkins M."/>
            <person name="Bulaj G."/>
            <person name="Jimenez E.C."/>
            <person name="Olivera B.M."/>
        </authorList>
    </citation>
    <scope>ERRATUM OF PUBMED:16098199</scope>
</reference>
<protein>
    <recommendedName>
        <fullName>Iota-conotoxin-like Fi11.1</fullName>
    </recommendedName>
</protein>
<comment type="function">
    <text evidence="1">Iota-conotoxins bind to voltage-gated sodium channels (Nav) and act as agonists by shifting the voltage-dependence of activation to more hyperpolarized levels. Produces general excitatory symptoms (By similarity).</text>
</comment>
<comment type="subcellular location">
    <subcellularLocation>
        <location evidence="1">Secreted</location>
    </subcellularLocation>
</comment>
<comment type="tissue specificity">
    <text>Expressed by the venom duct.</text>
</comment>
<comment type="domain">
    <text>The cysteine framework is XI (C-C-CC-CC-C-C).</text>
</comment>
<comment type="similarity">
    <text evidence="3">Belongs to the conotoxin I1 superfamily.</text>
</comment>
<keyword id="KW-0208">D-amino acid</keyword>
<keyword id="KW-1015">Disulfide bond</keyword>
<keyword id="KW-0872">Ion channel impairing toxin</keyword>
<keyword id="KW-0528">Neurotoxin</keyword>
<keyword id="KW-0964">Secreted</keyword>
<keyword id="KW-0800">Toxin</keyword>
<keyword id="KW-0738">Voltage-gated sodium channel impairing toxin</keyword>
<feature type="chain" id="PRO_0000262683" description="Iota-conotoxin-like Fi11.1">
    <location>
        <begin position="1" status="less than"/>
        <end position="43"/>
    </location>
</feature>
<feature type="propeptide" id="PRO_0000262684" description="Removed by a carboxypeptidase" evidence="1">
    <location>
        <position position="44"/>
    </location>
</feature>
<feature type="modified residue" description="D-leucine" evidence="1">
    <location>
        <position position="42"/>
    </location>
</feature>
<feature type="disulfide bond" evidence="2">
    <location>
        <begin position="5"/>
        <end position="19"/>
    </location>
</feature>
<feature type="disulfide bond" evidence="2">
    <location>
        <begin position="12"/>
        <end position="22"/>
    </location>
</feature>
<feature type="disulfide bond" evidence="2">
    <location>
        <begin position="18"/>
        <end position="27"/>
    </location>
</feature>
<feature type="disulfide bond" evidence="2">
    <location>
        <begin position="21"/>
        <end position="36"/>
    </location>
</feature>
<feature type="non-terminal residue">
    <location>
        <position position="1"/>
    </location>
</feature>
<proteinExistence type="evidence at transcript level"/>